<organism>
    <name type="scientific">Cupriavidus metallidurans (strain ATCC 43123 / DSM 2839 / NBRC 102507 / CH34)</name>
    <name type="common">Ralstonia metallidurans</name>
    <dbReference type="NCBI Taxonomy" id="266264"/>
    <lineage>
        <taxon>Bacteria</taxon>
        <taxon>Pseudomonadati</taxon>
        <taxon>Pseudomonadota</taxon>
        <taxon>Betaproteobacteria</taxon>
        <taxon>Burkholderiales</taxon>
        <taxon>Burkholderiaceae</taxon>
        <taxon>Cupriavidus</taxon>
    </lineage>
</organism>
<dbReference type="EMBL" id="CP000352">
    <property type="protein sequence ID" value="ABF08910.1"/>
    <property type="molecule type" value="Genomic_DNA"/>
</dbReference>
<dbReference type="RefSeq" id="WP_011516746.1">
    <property type="nucleotide sequence ID" value="NC_007973.1"/>
</dbReference>
<dbReference type="SMR" id="Q1LLR6"/>
<dbReference type="STRING" id="266264.Rmet_2031"/>
<dbReference type="KEGG" id="rme:Rmet_2031"/>
<dbReference type="eggNOG" id="COG0532">
    <property type="taxonomic scope" value="Bacteria"/>
</dbReference>
<dbReference type="HOGENOM" id="CLU_006301_6_0_4"/>
<dbReference type="Proteomes" id="UP000002429">
    <property type="component" value="Chromosome"/>
</dbReference>
<dbReference type="GO" id="GO:0005829">
    <property type="term" value="C:cytosol"/>
    <property type="evidence" value="ECO:0007669"/>
    <property type="project" value="TreeGrafter"/>
</dbReference>
<dbReference type="GO" id="GO:0005525">
    <property type="term" value="F:GTP binding"/>
    <property type="evidence" value="ECO:0007669"/>
    <property type="project" value="UniProtKB-KW"/>
</dbReference>
<dbReference type="GO" id="GO:0003924">
    <property type="term" value="F:GTPase activity"/>
    <property type="evidence" value="ECO:0007669"/>
    <property type="project" value="UniProtKB-UniRule"/>
</dbReference>
<dbReference type="GO" id="GO:0097216">
    <property type="term" value="F:guanosine tetraphosphate binding"/>
    <property type="evidence" value="ECO:0007669"/>
    <property type="project" value="UniProtKB-ARBA"/>
</dbReference>
<dbReference type="GO" id="GO:0003743">
    <property type="term" value="F:translation initiation factor activity"/>
    <property type="evidence" value="ECO:0007669"/>
    <property type="project" value="UniProtKB-UniRule"/>
</dbReference>
<dbReference type="CDD" id="cd01887">
    <property type="entry name" value="IF2_eIF5B"/>
    <property type="match status" value="1"/>
</dbReference>
<dbReference type="CDD" id="cd03702">
    <property type="entry name" value="IF2_mtIF2_II"/>
    <property type="match status" value="1"/>
</dbReference>
<dbReference type="CDD" id="cd03692">
    <property type="entry name" value="mtIF2_IVc"/>
    <property type="match status" value="1"/>
</dbReference>
<dbReference type="FunFam" id="2.40.30.10:FF:000007">
    <property type="entry name" value="Translation initiation factor IF-2"/>
    <property type="match status" value="1"/>
</dbReference>
<dbReference type="FunFam" id="2.40.30.10:FF:000008">
    <property type="entry name" value="Translation initiation factor IF-2"/>
    <property type="match status" value="1"/>
</dbReference>
<dbReference type="FunFam" id="3.40.50.10050:FF:000001">
    <property type="entry name" value="Translation initiation factor IF-2"/>
    <property type="match status" value="1"/>
</dbReference>
<dbReference type="FunFam" id="3.40.50.300:FF:000019">
    <property type="entry name" value="Translation initiation factor IF-2"/>
    <property type="match status" value="1"/>
</dbReference>
<dbReference type="Gene3D" id="3.40.50.300">
    <property type="entry name" value="P-loop containing nucleotide triphosphate hydrolases"/>
    <property type="match status" value="1"/>
</dbReference>
<dbReference type="Gene3D" id="3.30.56.50">
    <property type="entry name" value="Putative DNA-binding domain, N-terminal subdomain of bacterial translation initiation factor IF2"/>
    <property type="match status" value="1"/>
</dbReference>
<dbReference type="Gene3D" id="2.40.30.10">
    <property type="entry name" value="Translation factors"/>
    <property type="match status" value="2"/>
</dbReference>
<dbReference type="Gene3D" id="3.40.50.10050">
    <property type="entry name" value="Translation initiation factor IF- 2, domain 3"/>
    <property type="match status" value="1"/>
</dbReference>
<dbReference type="HAMAP" id="MF_00100_B">
    <property type="entry name" value="IF_2_B"/>
    <property type="match status" value="1"/>
</dbReference>
<dbReference type="InterPro" id="IPR009061">
    <property type="entry name" value="DNA-bd_dom_put_sf"/>
</dbReference>
<dbReference type="InterPro" id="IPR053905">
    <property type="entry name" value="EF-G-like_DII"/>
</dbReference>
<dbReference type="InterPro" id="IPR004161">
    <property type="entry name" value="EFTu-like_2"/>
</dbReference>
<dbReference type="InterPro" id="IPR013575">
    <property type="entry name" value="IF2_assoc_dom_bac"/>
</dbReference>
<dbReference type="InterPro" id="IPR044145">
    <property type="entry name" value="IF2_II"/>
</dbReference>
<dbReference type="InterPro" id="IPR006847">
    <property type="entry name" value="IF2_N"/>
</dbReference>
<dbReference type="InterPro" id="IPR027417">
    <property type="entry name" value="P-loop_NTPase"/>
</dbReference>
<dbReference type="InterPro" id="IPR005225">
    <property type="entry name" value="Small_GTP-bd"/>
</dbReference>
<dbReference type="InterPro" id="IPR000795">
    <property type="entry name" value="T_Tr_GTP-bd_dom"/>
</dbReference>
<dbReference type="InterPro" id="IPR000178">
    <property type="entry name" value="TF_IF2_bacterial-like"/>
</dbReference>
<dbReference type="InterPro" id="IPR015760">
    <property type="entry name" value="TIF_IF2"/>
</dbReference>
<dbReference type="InterPro" id="IPR023115">
    <property type="entry name" value="TIF_IF2_dom3"/>
</dbReference>
<dbReference type="InterPro" id="IPR036925">
    <property type="entry name" value="TIF_IF2_dom3_sf"/>
</dbReference>
<dbReference type="InterPro" id="IPR009000">
    <property type="entry name" value="Transl_B-barrel_sf"/>
</dbReference>
<dbReference type="NCBIfam" id="TIGR00487">
    <property type="entry name" value="IF-2"/>
    <property type="match status" value="1"/>
</dbReference>
<dbReference type="NCBIfam" id="TIGR00231">
    <property type="entry name" value="small_GTP"/>
    <property type="match status" value="1"/>
</dbReference>
<dbReference type="PANTHER" id="PTHR43381:SF5">
    <property type="entry name" value="TR-TYPE G DOMAIN-CONTAINING PROTEIN"/>
    <property type="match status" value="1"/>
</dbReference>
<dbReference type="PANTHER" id="PTHR43381">
    <property type="entry name" value="TRANSLATION INITIATION FACTOR IF-2-RELATED"/>
    <property type="match status" value="1"/>
</dbReference>
<dbReference type="Pfam" id="PF22042">
    <property type="entry name" value="EF-G_D2"/>
    <property type="match status" value="1"/>
</dbReference>
<dbReference type="Pfam" id="PF00009">
    <property type="entry name" value="GTP_EFTU"/>
    <property type="match status" value="1"/>
</dbReference>
<dbReference type="Pfam" id="PF03144">
    <property type="entry name" value="GTP_EFTU_D2"/>
    <property type="match status" value="1"/>
</dbReference>
<dbReference type="Pfam" id="PF11987">
    <property type="entry name" value="IF-2"/>
    <property type="match status" value="1"/>
</dbReference>
<dbReference type="Pfam" id="PF08364">
    <property type="entry name" value="IF2_assoc"/>
    <property type="match status" value="1"/>
</dbReference>
<dbReference type="Pfam" id="PF04760">
    <property type="entry name" value="IF2_N"/>
    <property type="match status" value="2"/>
</dbReference>
<dbReference type="SUPFAM" id="SSF52156">
    <property type="entry name" value="Initiation factor IF2/eIF5b, domain 3"/>
    <property type="match status" value="1"/>
</dbReference>
<dbReference type="SUPFAM" id="SSF52540">
    <property type="entry name" value="P-loop containing nucleoside triphosphate hydrolases"/>
    <property type="match status" value="1"/>
</dbReference>
<dbReference type="SUPFAM" id="SSF46955">
    <property type="entry name" value="Putative DNA-binding domain"/>
    <property type="match status" value="1"/>
</dbReference>
<dbReference type="SUPFAM" id="SSF50447">
    <property type="entry name" value="Translation proteins"/>
    <property type="match status" value="2"/>
</dbReference>
<dbReference type="PROSITE" id="PS51722">
    <property type="entry name" value="G_TR_2"/>
    <property type="match status" value="1"/>
</dbReference>
<dbReference type="PROSITE" id="PS01176">
    <property type="entry name" value="IF2"/>
    <property type="match status" value="1"/>
</dbReference>
<feature type="chain" id="PRO_0000335501" description="Translation initiation factor IF-2">
    <location>
        <begin position="1"/>
        <end position="979"/>
    </location>
</feature>
<feature type="domain" description="tr-type G">
    <location>
        <begin position="479"/>
        <end position="646"/>
    </location>
</feature>
<feature type="region of interest" description="Disordered" evidence="3">
    <location>
        <begin position="50"/>
        <end position="385"/>
    </location>
</feature>
<feature type="region of interest" description="G1" evidence="1">
    <location>
        <begin position="488"/>
        <end position="495"/>
    </location>
</feature>
<feature type="region of interest" description="G2" evidence="1">
    <location>
        <begin position="513"/>
        <end position="517"/>
    </location>
</feature>
<feature type="region of interest" description="G3" evidence="1">
    <location>
        <begin position="534"/>
        <end position="537"/>
    </location>
</feature>
<feature type="region of interest" description="G4" evidence="1">
    <location>
        <begin position="588"/>
        <end position="591"/>
    </location>
</feature>
<feature type="region of interest" description="G5" evidence="1">
    <location>
        <begin position="624"/>
        <end position="626"/>
    </location>
</feature>
<feature type="compositionally biased region" description="Basic and acidic residues" evidence="3">
    <location>
        <begin position="50"/>
        <end position="77"/>
    </location>
</feature>
<feature type="compositionally biased region" description="Polar residues" evidence="3">
    <location>
        <begin position="78"/>
        <end position="87"/>
    </location>
</feature>
<feature type="compositionally biased region" description="Basic and acidic residues" evidence="3">
    <location>
        <begin position="98"/>
        <end position="109"/>
    </location>
</feature>
<feature type="compositionally biased region" description="Basic and acidic residues" evidence="3">
    <location>
        <begin position="121"/>
        <end position="142"/>
    </location>
</feature>
<feature type="compositionally biased region" description="Basic and acidic residues" evidence="3">
    <location>
        <begin position="149"/>
        <end position="173"/>
    </location>
</feature>
<feature type="compositionally biased region" description="Low complexity" evidence="3">
    <location>
        <begin position="174"/>
        <end position="192"/>
    </location>
</feature>
<feature type="compositionally biased region" description="Basic and acidic residues" evidence="3">
    <location>
        <begin position="196"/>
        <end position="211"/>
    </location>
</feature>
<feature type="compositionally biased region" description="Basic and acidic residues" evidence="3">
    <location>
        <begin position="219"/>
        <end position="263"/>
    </location>
</feature>
<feature type="compositionally biased region" description="Basic and acidic residues" evidence="3">
    <location>
        <begin position="280"/>
        <end position="291"/>
    </location>
</feature>
<feature type="compositionally biased region" description="Low complexity" evidence="3">
    <location>
        <begin position="317"/>
        <end position="327"/>
    </location>
</feature>
<feature type="compositionally biased region" description="Gly residues" evidence="3">
    <location>
        <begin position="351"/>
        <end position="368"/>
    </location>
</feature>
<feature type="binding site" evidence="2">
    <location>
        <begin position="488"/>
        <end position="495"/>
    </location>
    <ligand>
        <name>GTP</name>
        <dbReference type="ChEBI" id="CHEBI:37565"/>
    </ligand>
</feature>
<feature type="binding site" evidence="2">
    <location>
        <begin position="534"/>
        <end position="538"/>
    </location>
    <ligand>
        <name>GTP</name>
        <dbReference type="ChEBI" id="CHEBI:37565"/>
    </ligand>
</feature>
<feature type="binding site" evidence="2">
    <location>
        <begin position="588"/>
        <end position="591"/>
    </location>
    <ligand>
        <name>GTP</name>
        <dbReference type="ChEBI" id="CHEBI:37565"/>
    </ligand>
</feature>
<name>IF2_CUPMC</name>
<evidence type="ECO:0000250" key="1"/>
<evidence type="ECO:0000255" key="2">
    <source>
        <dbReference type="HAMAP-Rule" id="MF_00100"/>
    </source>
</evidence>
<evidence type="ECO:0000256" key="3">
    <source>
        <dbReference type="SAM" id="MobiDB-lite"/>
    </source>
</evidence>
<comment type="function">
    <text evidence="2">One of the essential components for the initiation of protein synthesis. Protects formylmethionyl-tRNA from spontaneous hydrolysis and promotes its binding to the 30S ribosomal subunits. Also involved in the hydrolysis of GTP during the formation of the 70S ribosomal complex.</text>
</comment>
<comment type="subcellular location">
    <subcellularLocation>
        <location evidence="2">Cytoplasm</location>
    </subcellularLocation>
</comment>
<comment type="similarity">
    <text evidence="2">Belongs to the TRAFAC class translation factor GTPase superfamily. Classic translation factor GTPase family. IF-2 subfamily.</text>
</comment>
<reference key="1">
    <citation type="journal article" date="2010" name="PLoS ONE">
        <title>The complete genome sequence of Cupriavidus metallidurans strain CH34, a master survivalist in harsh and anthropogenic environments.</title>
        <authorList>
            <person name="Janssen P.J."/>
            <person name="Van Houdt R."/>
            <person name="Moors H."/>
            <person name="Monsieurs P."/>
            <person name="Morin N."/>
            <person name="Michaux A."/>
            <person name="Benotmane M.A."/>
            <person name="Leys N."/>
            <person name="Vallaeys T."/>
            <person name="Lapidus A."/>
            <person name="Monchy S."/>
            <person name="Medigue C."/>
            <person name="Taghavi S."/>
            <person name="McCorkle S."/>
            <person name="Dunn J."/>
            <person name="van der Lelie D."/>
            <person name="Mergeay M."/>
        </authorList>
    </citation>
    <scope>NUCLEOTIDE SEQUENCE [LARGE SCALE GENOMIC DNA]</scope>
    <source>
        <strain>ATCC 43123 / DSM 2839 / NBRC 102507 / CH34</strain>
    </source>
</reference>
<sequence length="979" mass="104941">MASTTVAQLAAELSRSPAALLEQLQAAGVGKATPDDVITESDKTRLLDYLKRSHGQSDDSARKKITLTKRETSEIRQSDSTGKTRTVQVEVRKKRVLIKRDDVESHGDGADSQESAEAAAEEVRRDEEQRREQAEALARQEAEAQAAREAAEREEAERRAKQEALEAEQRRQAELLAQKAAEEAAAAQAAADAAEETAREKAEEDKARLATERAQAQKNADDAKAAVDKARAEQDSAKAAADKARAEQDAAARRRREAAEAEARAIQQMLNAPPRVLKAPSERKAEEKKAEQTGTLHKPVKPAGATTEAKKDDKKAAPAATTTTAAAGDKKGAKGGKTGTWQDEGSRGKKGGGLKTRGDSSGGVGGWRSGPRGRGGKHNADDARSNFQAPTEPVVREVHVPETVSVADLAHKMAVKASEVIKQMMKLGQMVTINQVLDQETAMIVVEEMGHKAFAAKLDDPEALLVVDGEDHGDAEMLPRPPVVTVMGHVDHGKTSLLDYIRRTKVAAGEAGGITQHIGAYHVETDRGVITFLDTPGHEAFTAMRARGAKATDIVILVVAADDGVMPQTKEAIAHAKAAGVPIVVAITKVDKPEANPDRVKQELVAEQVVPEEYGGESPFVPVSAKTGQGIDDLLENVLLQAEVLELRAPVDAPAKGLVVEAQLDKGKGPIATILVSSGTLKRGDVVLAGSAYGRVRAMLDENGKPSKEAGPSIPVEIQGLSEVPAAGEEVLVLPDERKAREIALFRQGKFRDVKLAKQQAAKLETMLEQMAEGEVQTLPLIVKADVQGSQEALVQSLQKLSTSEVRVQIVHGGVGGISESDVNLATASKAVIIGFNVRADAGARKLAEHNGIDIRYYNIIYDAVDEIKAAMSGMLAPEKRETTIGQVEVRQVFRVPKVGAVAGCMVTDGLIKRNSMVRVLRNNVVIHDGELDSLKRFKDDVKEVKQGFECGLSIKNFNDVQEGDQLEVYEITEVARTL</sequence>
<protein>
    <recommendedName>
        <fullName evidence="2">Translation initiation factor IF-2</fullName>
    </recommendedName>
</protein>
<proteinExistence type="inferred from homology"/>
<keyword id="KW-0963">Cytoplasm</keyword>
<keyword id="KW-0342">GTP-binding</keyword>
<keyword id="KW-0396">Initiation factor</keyword>
<keyword id="KW-0547">Nucleotide-binding</keyword>
<keyword id="KW-0648">Protein biosynthesis</keyword>
<keyword id="KW-1185">Reference proteome</keyword>
<gene>
    <name evidence="2" type="primary">infB</name>
    <name type="ordered locus">Rmet_2031</name>
</gene>
<accession>Q1LLR6</accession>